<accession>Q96NN9</accession>
<accession>B7WP37</accession>
<accession>D3DX37</accession>
<accession>D3DX38</accession>
<accession>Q6ZT44</accession>
<accession>Q8N1V3</accession>
<accession>Q8N5E0</accession>
<protein>
    <recommendedName>
        <fullName>Apoptosis-inducing factor 3</fullName>
        <ecNumber>1.-.-.-</ecNumber>
    </recommendedName>
    <alternativeName>
        <fullName>Apoptosis-inducing factor-like protein</fullName>
    </alternativeName>
</protein>
<reference key="1">
    <citation type="journal article" date="2005" name="J. Biol. Chem.">
        <title>Molecular cloning and characterization of a human AIF-like gene with ability to induce apoptosis.</title>
        <authorList>
            <person name="Xie Q."/>
            <person name="Lin T."/>
            <person name="Zhang Y."/>
            <person name="Zheng J."/>
            <person name="Bonanno J.A."/>
        </authorList>
    </citation>
    <scope>NUCLEOTIDE SEQUENCE [MRNA] (ISOFORM 1)</scope>
    <scope>FUNCTION</scope>
    <scope>SUBCELLULAR LOCATION</scope>
    <scope>TISSUE SPECIFICITY</scope>
</reference>
<reference key="2">
    <citation type="journal article" date="2004" name="Genome Biol.">
        <title>A genome annotation-driven approach to cloning the human ORFeome.</title>
        <authorList>
            <person name="Collins J.E."/>
            <person name="Wright C.L."/>
            <person name="Edwards C.A."/>
            <person name="Davis M.P."/>
            <person name="Grinham J.A."/>
            <person name="Cole C.G."/>
            <person name="Goward M.E."/>
            <person name="Aguado B."/>
            <person name="Mallya M."/>
            <person name="Mokrab Y."/>
            <person name="Huckle E.J."/>
            <person name="Beare D.M."/>
            <person name="Dunham I."/>
        </authorList>
    </citation>
    <scope>NUCLEOTIDE SEQUENCE [LARGE SCALE MRNA] (ISOFORM 1)</scope>
</reference>
<reference key="3">
    <citation type="journal article" date="2004" name="Nat. Genet.">
        <title>Complete sequencing and characterization of 21,243 full-length human cDNAs.</title>
        <authorList>
            <person name="Ota T."/>
            <person name="Suzuki Y."/>
            <person name="Nishikawa T."/>
            <person name="Otsuki T."/>
            <person name="Sugiyama T."/>
            <person name="Irie R."/>
            <person name="Wakamatsu A."/>
            <person name="Hayashi K."/>
            <person name="Sato H."/>
            <person name="Nagai K."/>
            <person name="Kimura K."/>
            <person name="Makita H."/>
            <person name="Sekine M."/>
            <person name="Obayashi M."/>
            <person name="Nishi T."/>
            <person name="Shibahara T."/>
            <person name="Tanaka T."/>
            <person name="Ishii S."/>
            <person name="Yamamoto J."/>
            <person name="Saito K."/>
            <person name="Kawai Y."/>
            <person name="Isono Y."/>
            <person name="Nakamura Y."/>
            <person name="Nagahari K."/>
            <person name="Murakami K."/>
            <person name="Yasuda T."/>
            <person name="Iwayanagi T."/>
            <person name="Wagatsuma M."/>
            <person name="Shiratori A."/>
            <person name="Sudo H."/>
            <person name="Hosoiri T."/>
            <person name="Kaku Y."/>
            <person name="Kodaira H."/>
            <person name="Kondo H."/>
            <person name="Sugawara M."/>
            <person name="Takahashi M."/>
            <person name="Kanda K."/>
            <person name="Yokoi T."/>
            <person name="Furuya T."/>
            <person name="Kikkawa E."/>
            <person name="Omura Y."/>
            <person name="Abe K."/>
            <person name="Kamihara K."/>
            <person name="Katsuta N."/>
            <person name="Sato K."/>
            <person name="Tanikawa M."/>
            <person name="Yamazaki M."/>
            <person name="Ninomiya K."/>
            <person name="Ishibashi T."/>
            <person name="Yamashita H."/>
            <person name="Murakawa K."/>
            <person name="Fujimori K."/>
            <person name="Tanai H."/>
            <person name="Kimata M."/>
            <person name="Watanabe M."/>
            <person name="Hiraoka S."/>
            <person name="Chiba Y."/>
            <person name="Ishida S."/>
            <person name="Ono Y."/>
            <person name="Takiguchi S."/>
            <person name="Watanabe S."/>
            <person name="Yosida M."/>
            <person name="Hotuta T."/>
            <person name="Kusano J."/>
            <person name="Kanehori K."/>
            <person name="Takahashi-Fujii A."/>
            <person name="Hara H."/>
            <person name="Tanase T.-O."/>
            <person name="Nomura Y."/>
            <person name="Togiya S."/>
            <person name="Komai F."/>
            <person name="Hara R."/>
            <person name="Takeuchi K."/>
            <person name="Arita M."/>
            <person name="Imose N."/>
            <person name="Musashino K."/>
            <person name="Yuuki H."/>
            <person name="Oshima A."/>
            <person name="Sasaki N."/>
            <person name="Aotsuka S."/>
            <person name="Yoshikawa Y."/>
            <person name="Matsunawa H."/>
            <person name="Ichihara T."/>
            <person name="Shiohata N."/>
            <person name="Sano S."/>
            <person name="Moriya S."/>
            <person name="Momiyama H."/>
            <person name="Satoh N."/>
            <person name="Takami S."/>
            <person name="Terashima Y."/>
            <person name="Suzuki O."/>
            <person name="Nakagawa S."/>
            <person name="Senoh A."/>
            <person name="Mizoguchi H."/>
            <person name="Goto Y."/>
            <person name="Shimizu F."/>
            <person name="Wakebe H."/>
            <person name="Hishigaki H."/>
            <person name="Watanabe T."/>
            <person name="Sugiyama A."/>
            <person name="Takemoto M."/>
            <person name="Kawakami B."/>
            <person name="Yamazaki M."/>
            <person name="Watanabe K."/>
            <person name="Kumagai A."/>
            <person name="Itakura S."/>
            <person name="Fukuzumi Y."/>
            <person name="Fujimori Y."/>
            <person name="Komiyama M."/>
            <person name="Tashiro H."/>
            <person name="Tanigami A."/>
            <person name="Fujiwara T."/>
            <person name="Ono T."/>
            <person name="Yamada K."/>
            <person name="Fujii Y."/>
            <person name="Ozaki K."/>
            <person name="Hirao M."/>
            <person name="Ohmori Y."/>
            <person name="Kawabata A."/>
            <person name="Hikiji T."/>
            <person name="Kobatake N."/>
            <person name="Inagaki H."/>
            <person name="Ikema Y."/>
            <person name="Okamoto S."/>
            <person name="Okitani R."/>
            <person name="Kawakami T."/>
            <person name="Noguchi S."/>
            <person name="Itoh T."/>
            <person name="Shigeta K."/>
            <person name="Senba T."/>
            <person name="Matsumura K."/>
            <person name="Nakajima Y."/>
            <person name="Mizuno T."/>
            <person name="Morinaga M."/>
            <person name="Sasaki M."/>
            <person name="Togashi T."/>
            <person name="Oyama M."/>
            <person name="Hata H."/>
            <person name="Watanabe M."/>
            <person name="Komatsu T."/>
            <person name="Mizushima-Sugano J."/>
            <person name="Satoh T."/>
            <person name="Shirai Y."/>
            <person name="Takahashi Y."/>
            <person name="Nakagawa K."/>
            <person name="Okumura K."/>
            <person name="Nagase T."/>
            <person name="Nomura N."/>
            <person name="Kikuchi H."/>
            <person name="Masuho Y."/>
            <person name="Yamashita R."/>
            <person name="Nakai K."/>
            <person name="Yada T."/>
            <person name="Nakamura Y."/>
            <person name="Ohara O."/>
            <person name="Isogai T."/>
            <person name="Sugano S."/>
        </authorList>
    </citation>
    <scope>NUCLEOTIDE SEQUENCE [LARGE SCALE MRNA] (ISOFORMS 1 AND 2)</scope>
    <source>
        <tissue>Brain</tissue>
        <tissue>Caudate nucleus</tissue>
    </source>
</reference>
<reference key="4">
    <citation type="journal article" date="1999" name="Nature">
        <title>The DNA sequence of human chromosome 22.</title>
        <authorList>
            <person name="Dunham I."/>
            <person name="Hunt A.R."/>
            <person name="Collins J.E."/>
            <person name="Bruskiewich R."/>
            <person name="Beare D.M."/>
            <person name="Clamp M."/>
            <person name="Smink L.J."/>
            <person name="Ainscough R."/>
            <person name="Almeida J.P."/>
            <person name="Babbage A.K."/>
            <person name="Bagguley C."/>
            <person name="Bailey J."/>
            <person name="Barlow K.F."/>
            <person name="Bates K.N."/>
            <person name="Beasley O.P."/>
            <person name="Bird C.P."/>
            <person name="Blakey S.E."/>
            <person name="Bridgeman A.M."/>
            <person name="Buck D."/>
            <person name="Burgess J."/>
            <person name="Burrill W.D."/>
            <person name="Burton J."/>
            <person name="Carder C."/>
            <person name="Carter N.P."/>
            <person name="Chen Y."/>
            <person name="Clark G."/>
            <person name="Clegg S.M."/>
            <person name="Cobley V.E."/>
            <person name="Cole C.G."/>
            <person name="Collier R.E."/>
            <person name="Connor R."/>
            <person name="Conroy D."/>
            <person name="Corby N.R."/>
            <person name="Coville G.J."/>
            <person name="Cox A.V."/>
            <person name="Davis J."/>
            <person name="Dawson E."/>
            <person name="Dhami P.D."/>
            <person name="Dockree C."/>
            <person name="Dodsworth S.J."/>
            <person name="Durbin R.M."/>
            <person name="Ellington A.G."/>
            <person name="Evans K.L."/>
            <person name="Fey J.M."/>
            <person name="Fleming K."/>
            <person name="French L."/>
            <person name="Garner A.A."/>
            <person name="Gilbert J.G.R."/>
            <person name="Goward M.E."/>
            <person name="Grafham D.V."/>
            <person name="Griffiths M.N.D."/>
            <person name="Hall C."/>
            <person name="Hall R.E."/>
            <person name="Hall-Tamlyn G."/>
            <person name="Heathcott R.W."/>
            <person name="Ho S."/>
            <person name="Holmes S."/>
            <person name="Hunt S.E."/>
            <person name="Jones M.C."/>
            <person name="Kershaw J."/>
            <person name="Kimberley A.M."/>
            <person name="King A."/>
            <person name="Laird G.K."/>
            <person name="Langford C.F."/>
            <person name="Leversha M.A."/>
            <person name="Lloyd C."/>
            <person name="Lloyd D.M."/>
            <person name="Martyn I.D."/>
            <person name="Mashreghi-Mohammadi M."/>
            <person name="Matthews L.H."/>
            <person name="Mccann O.T."/>
            <person name="Mcclay J."/>
            <person name="Mclaren S."/>
            <person name="McMurray A.A."/>
            <person name="Milne S.A."/>
            <person name="Mortimore B.J."/>
            <person name="Odell C.N."/>
            <person name="Pavitt R."/>
            <person name="Pearce A.V."/>
            <person name="Pearson D."/>
            <person name="Phillimore B.J.C.T."/>
            <person name="Phillips S.H."/>
            <person name="Plumb R.W."/>
            <person name="Ramsay H."/>
            <person name="Ramsey Y."/>
            <person name="Rogers L."/>
            <person name="Ross M.T."/>
            <person name="Scott C.E."/>
            <person name="Sehra H.K."/>
            <person name="Skuce C.D."/>
            <person name="Smalley S."/>
            <person name="Smith M.L."/>
            <person name="Soderlund C."/>
            <person name="Spragon L."/>
            <person name="Steward C.A."/>
            <person name="Sulston J.E."/>
            <person name="Swann R.M."/>
            <person name="Vaudin M."/>
            <person name="Wall M."/>
            <person name="Wallis J.M."/>
            <person name="Whiteley M.N."/>
            <person name="Willey D.L."/>
            <person name="Williams L."/>
            <person name="Williams S.A."/>
            <person name="Williamson H."/>
            <person name="Wilmer T.E."/>
            <person name="Wilming L."/>
            <person name="Wright C.L."/>
            <person name="Hubbard T."/>
            <person name="Bentley D.R."/>
            <person name="Beck S."/>
            <person name="Rogers J."/>
            <person name="Shimizu N."/>
            <person name="Minoshima S."/>
            <person name="Kawasaki K."/>
            <person name="Sasaki T."/>
            <person name="Asakawa S."/>
            <person name="Kudoh J."/>
            <person name="Shintani A."/>
            <person name="Shibuya K."/>
            <person name="Yoshizaki Y."/>
            <person name="Aoki N."/>
            <person name="Mitsuyama S."/>
            <person name="Roe B.A."/>
            <person name="Chen F."/>
            <person name="Chu L."/>
            <person name="Crabtree J."/>
            <person name="Deschamps S."/>
            <person name="Do A."/>
            <person name="Do T."/>
            <person name="Dorman A."/>
            <person name="Fang F."/>
            <person name="Fu Y."/>
            <person name="Hu P."/>
            <person name="Hua A."/>
            <person name="Kenton S."/>
            <person name="Lai H."/>
            <person name="Lao H.I."/>
            <person name="Lewis J."/>
            <person name="Lewis S."/>
            <person name="Lin S.-P."/>
            <person name="Loh P."/>
            <person name="Malaj E."/>
            <person name="Nguyen T."/>
            <person name="Pan H."/>
            <person name="Phan S."/>
            <person name="Qi S."/>
            <person name="Qian Y."/>
            <person name="Ray L."/>
            <person name="Ren Q."/>
            <person name="Shaull S."/>
            <person name="Sloan D."/>
            <person name="Song L."/>
            <person name="Wang Q."/>
            <person name="Wang Y."/>
            <person name="Wang Z."/>
            <person name="White J."/>
            <person name="Willingham D."/>
            <person name="Wu H."/>
            <person name="Yao Z."/>
            <person name="Zhan M."/>
            <person name="Zhang G."/>
            <person name="Chissoe S."/>
            <person name="Murray J."/>
            <person name="Miller N."/>
            <person name="Minx P."/>
            <person name="Fulton R."/>
            <person name="Johnson D."/>
            <person name="Bemis G."/>
            <person name="Bentley D."/>
            <person name="Bradshaw H."/>
            <person name="Bourne S."/>
            <person name="Cordes M."/>
            <person name="Du Z."/>
            <person name="Fulton L."/>
            <person name="Goela D."/>
            <person name="Graves T."/>
            <person name="Hawkins J."/>
            <person name="Hinds K."/>
            <person name="Kemp K."/>
            <person name="Latreille P."/>
            <person name="Layman D."/>
            <person name="Ozersky P."/>
            <person name="Rohlfing T."/>
            <person name="Scheet P."/>
            <person name="Walker C."/>
            <person name="Wamsley A."/>
            <person name="Wohldmann P."/>
            <person name="Pepin K."/>
            <person name="Nelson J."/>
            <person name="Korf I."/>
            <person name="Bedell J.A."/>
            <person name="Hillier L.W."/>
            <person name="Mardis E."/>
            <person name="Waterston R."/>
            <person name="Wilson R."/>
            <person name="Emanuel B.S."/>
            <person name="Shaikh T."/>
            <person name="Kurahashi H."/>
            <person name="Saitta S."/>
            <person name="Budarf M.L."/>
            <person name="McDermid H.E."/>
            <person name="Johnson A."/>
            <person name="Wong A.C.C."/>
            <person name="Morrow B.E."/>
            <person name="Edelmann L."/>
            <person name="Kim U.J."/>
            <person name="Shizuya H."/>
            <person name="Simon M.I."/>
            <person name="Dumanski J.P."/>
            <person name="Peyrard M."/>
            <person name="Kedra D."/>
            <person name="Seroussi E."/>
            <person name="Fransson I."/>
            <person name="Tapia I."/>
            <person name="Bruder C.E."/>
            <person name="O'Brien K.P."/>
            <person name="Wilkinson P."/>
            <person name="Bodenteich A."/>
            <person name="Hartman K."/>
            <person name="Hu X."/>
            <person name="Khan A.S."/>
            <person name="Lane L."/>
            <person name="Tilahun Y."/>
            <person name="Wright H."/>
        </authorList>
    </citation>
    <scope>NUCLEOTIDE SEQUENCE [LARGE SCALE GENOMIC DNA]</scope>
</reference>
<reference key="5">
    <citation type="submission" date="2005-09" db="EMBL/GenBank/DDBJ databases">
        <authorList>
            <person name="Mural R.J."/>
            <person name="Istrail S."/>
            <person name="Sutton G.G."/>
            <person name="Florea L."/>
            <person name="Halpern A.L."/>
            <person name="Mobarry C.M."/>
            <person name="Lippert R."/>
            <person name="Walenz B."/>
            <person name="Shatkay H."/>
            <person name="Dew I."/>
            <person name="Miller J.R."/>
            <person name="Flanigan M.J."/>
            <person name="Edwards N.J."/>
            <person name="Bolanos R."/>
            <person name="Fasulo D."/>
            <person name="Halldorsson B.V."/>
            <person name="Hannenhalli S."/>
            <person name="Turner R."/>
            <person name="Yooseph S."/>
            <person name="Lu F."/>
            <person name="Nusskern D.R."/>
            <person name="Shue B.C."/>
            <person name="Zheng X.H."/>
            <person name="Zhong F."/>
            <person name="Delcher A.L."/>
            <person name="Huson D.H."/>
            <person name="Kravitz S.A."/>
            <person name="Mouchard L."/>
            <person name="Reinert K."/>
            <person name="Remington K.A."/>
            <person name="Clark A.G."/>
            <person name="Waterman M.S."/>
            <person name="Eichler E.E."/>
            <person name="Adams M.D."/>
            <person name="Hunkapiller M.W."/>
            <person name="Myers E.W."/>
            <person name="Venter J.C."/>
        </authorList>
    </citation>
    <scope>NUCLEOTIDE SEQUENCE [LARGE SCALE GENOMIC DNA]</scope>
</reference>
<reference key="6">
    <citation type="journal article" date="2004" name="Genome Res.">
        <title>The status, quality, and expansion of the NIH full-length cDNA project: the Mammalian Gene Collection (MGC).</title>
        <authorList>
            <consortium name="The MGC Project Team"/>
        </authorList>
    </citation>
    <scope>NUCLEOTIDE SEQUENCE [LARGE SCALE MRNA] (ISOFORM 3)</scope>
    <source>
        <tissue>Pancreas</tissue>
    </source>
</reference>
<keyword id="KW-0001">2Fe-2S</keyword>
<keyword id="KW-0002">3D-structure</keyword>
<keyword id="KW-0025">Alternative splicing</keyword>
<keyword id="KW-0053">Apoptosis</keyword>
<keyword id="KW-0249">Electron transport</keyword>
<keyword id="KW-0274">FAD</keyword>
<keyword id="KW-0285">Flavoprotein</keyword>
<keyword id="KW-0408">Iron</keyword>
<keyword id="KW-0411">Iron-sulfur</keyword>
<keyword id="KW-0479">Metal-binding</keyword>
<keyword id="KW-0496">Mitochondrion</keyword>
<keyword id="KW-0560">Oxidoreductase</keyword>
<keyword id="KW-1267">Proteomics identification</keyword>
<keyword id="KW-1185">Reference proteome</keyword>
<keyword id="KW-0813">Transport</keyword>
<dbReference type="EC" id="1.-.-.-"/>
<dbReference type="EMBL" id="CR456342">
    <property type="protein sequence ID" value="CAG30228.1"/>
    <property type="molecule type" value="mRNA"/>
</dbReference>
<dbReference type="EMBL" id="AK055035">
    <property type="protein sequence ID" value="BAB70841.1"/>
    <property type="molecule type" value="mRNA"/>
</dbReference>
<dbReference type="EMBL" id="AK094844">
    <property type="protein sequence ID" value="BAC04434.1"/>
    <property type="molecule type" value="mRNA"/>
</dbReference>
<dbReference type="EMBL" id="AC002470">
    <property type="status" value="NOT_ANNOTATED_CDS"/>
    <property type="molecule type" value="Genomic_DNA"/>
</dbReference>
<dbReference type="EMBL" id="CH471176">
    <property type="protein sequence ID" value="EAX02924.1"/>
    <property type="molecule type" value="Genomic_DNA"/>
</dbReference>
<dbReference type="EMBL" id="CH471176">
    <property type="protein sequence ID" value="EAX02925.1"/>
    <property type="molecule type" value="Genomic_DNA"/>
</dbReference>
<dbReference type="EMBL" id="CH471176">
    <property type="protein sequence ID" value="EAX02926.1"/>
    <property type="molecule type" value="Genomic_DNA"/>
</dbReference>
<dbReference type="EMBL" id="CH471176">
    <property type="protein sequence ID" value="EAX02927.1"/>
    <property type="molecule type" value="Genomic_DNA"/>
</dbReference>
<dbReference type="EMBL" id="CH471176">
    <property type="protein sequence ID" value="EAX02930.1"/>
    <property type="molecule type" value="Genomic_DNA"/>
</dbReference>
<dbReference type="EMBL" id="CH471176">
    <property type="protein sequence ID" value="EAX02931.1"/>
    <property type="molecule type" value="Genomic_DNA"/>
</dbReference>
<dbReference type="EMBL" id="BC032485">
    <property type="protein sequence ID" value="AAH32485.1"/>
    <property type="molecule type" value="mRNA"/>
</dbReference>
<dbReference type="CCDS" id="CCDS13786.1">
    <molecule id="Q96NN9-1"/>
</dbReference>
<dbReference type="CCDS" id="CCDS33605.1">
    <molecule id="Q96NN9-3"/>
</dbReference>
<dbReference type="CCDS" id="CCDS54503.1">
    <molecule id="Q96NN9-2"/>
</dbReference>
<dbReference type="RefSeq" id="NP_001018070.1">
    <molecule id="Q96NN9-3"/>
    <property type="nucleotide sequence ID" value="NM_001018060.3"/>
</dbReference>
<dbReference type="RefSeq" id="NP_001139760.1">
    <molecule id="Q96NN9-2"/>
    <property type="nucleotide sequence ID" value="NM_001146288.2"/>
</dbReference>
<dbReference type="RefSeq" id="NP_001373743.1">
    <molecule id="Q96NN9-1"/>
    <property type="nucleotide sequence ID" value="NM_001386814.1"/>
</dbReference>
<dbReference type="RefSeq" id="NP_653305.1">
    <molecule id="Q96NN9-1"/>
    <property type="nucleotide sequence ID" value="NM_144704.3"/>
</dbReference>
<dbReference type="PDB" id="5O9V">
    <property type="method" value="X-ray"/>
    <property type="resolution" value="2.20 A"/>
    <property type="chains" value="C/D=2-9"/>
</dbReference>
<dbReference type="PDB" id="6QRM">
    <property type="method" value="X-ray"/>
    <property type="resolution" value="2.30 A"/>
    <property type="chains" value="C/D=2-11"/>
</dbReference>
<dbReference type="PDB" id="6SJZ">
    <property type="method" value="X-ray"/>
    <property type="resolution" value="2.00 A"/>
    <property type="chains" value="E/F=2-9"/>
</dbReference>
<dbReference type="PDB" id="6SK3">
    <property type="method" value="X-ray"/>
    <property type="resolution" value="2.70 A"/>
    <property type="chains" value="C/D=2-9"/>
</dbReference>
<dbReference type="PDB" id="6SK8">
    <property type="method" value="X-ray"/>
    <property type="resolution" value="1.87 A"/>
    <property type="chains" value="C/D=2-9"/>
</dbReference>
<dbReference type="PDB" id="6SKJ">
    <property type="method" value="X-ray"/>
    <property type="resolution" value="2.80 A"/>
    <property type="chains" value="C/D=2-9"/>
</dbReference>
<dbReference type="PDBsum" id="5O9V"/>
<dbReference type="PDBsum" id="6QRM"/>
<dbReference type="PDBsum" id="6SJZ"/>
<dbReference type="PDBsum" id="6SK3"/>
<dbReference type="PDBsum" id="6SK8"/>
<dbReference type="PDBsum" id="6SKJ"/>
<dbReference type="SMR" id="Q96NN9"/>
<dbReference type="BioGRID" id="127270">
    <property type="interactions" value="16"/>
</dbReference>
<dbReference type="FunCoup" id="Q96NN9">
    <property type="interactions" value="856"/>
</dbReference>
<dbReference type="IntAct" id="Q96NN9">
    <property type="interactions" value="7"/>
</dbReference>
<dbReference type="MINT" id="Q96NN9"/>
<dbReference type="STRING" id="9606.ENSP00000382120"/>
<dbReference type="iPTMnet" id="Q96NN9"/>
<dbReference type="PhosphoSitePlus" id="Q96NN9"/>
<dbReference type="BioMuta" id="AIFM3"/>
<dbReference type="DMDM" id="74732608"/>
<dbReference type="MassIVE" id="Q96NN9"/>
<dbReference type="PaxDb" id="9606-ENSP00000382120"/>
<dbReference type="PeptideAtlas" id="Q96NN9"/>
<dbReference type="ProteomicsDB" id="77540">
    <molecule id="Q96NN9-1"/>
</dbReference>
<dbReference type="ProteomicsDB" id="77541">
    <molecule id="Q96NN9-2"/>
</dbReference>
<dbReference type="ProteomicsDB" id="77542">
    <molecule id="Q96NN9-3"/>
</dbReference>
<dbReference type="Antibodypedia" id="231">
    <property type="antibodies" value="204 antibodies from 30 providers"/>
</dbReference>
<dbReference type="DNASU" id="150209"/>
<dbReference type="Ensembl" id="ENST00000399163.6">
    <molecule id="Q96NN9-3"/>
    <property type="protein sequence ID" value="ENSP00000382116.2"/>
    <property type="gene ID" value="ENSG00000183773.16"/>
</dbReference>
<dbReference type="Ensembl" id="ENST00000399167.6">
    <molecule id="Q96NN9-1"/>
    <property type="protein sequence ID" value="ENSP00000382120.2"/>
    <property type="gene ID" value="ENSG00000183773.16"/>
</dbReference>
<dbReference type="Ensembl" id="ENST00000405089.5">
    <molecule id="Q96NN9-2"/>
    <property type="protein sequence ID" value="ENSP00000385800.1"/>
    <property type="gene ID" value="ENSG00000183773.16"/>
</dbReference>
<dbReference type="Ensembl" id="ENST00000440238.4">
    <molecule id="Q96NN9-1"/>
    <property type="protein sequence ID" value="ENSP00000390798.2"/>
    <property type="gene ID" value="ENSG00000183773.16"/>
</dbReference>
<dbReference type="Ensembl" id="ENST00000683034.1">
    <molecule id="Q96NN9-3"/>
    <property type="protein sequence ID" value="ENSP00000507958.1"/>
    <property type="gene ID" value="ENSG00000183773.16"/>
</dbReference>
<dbReference type="GeneID" id="150209"/>
<dbReference type="KEGG" id="hsa:150209"/>
<dbReference type="MANE-Select" id="ENST00000440238.4">
    <property type="protein sequence ID" value="ENSP00000390798.2"/>
    <property type="RefSeq nucleotide sequence ID" value="NM_001386814.1"/>
    <property type="RefSeq protein sequence ID" value="NP_001373743.1"/>
</dbReference>
<dbReference type="UCSC" id="uc002ztj.3">
    <molecule id="Q96NN9-1"/>
    <property type="organism name" value="human"/>
</dbReference>
<dbReference type="AGR" id="HGNC:26398"/>
<dbReference type="CTD" id="150209"/>
<dbReference type="DisGeNET" id="150209"/>
<dbReference type="GeneCards" id="AIFM3"/>
<dbReference type="HGNC" id="HGNC:26398">
    <property type="gene designation" value="AIFM3"/>
</dbReference>
<dbReference type="HPA" id="ENSG00000183773">
    <property type="expression patterns" value="Tissue enhanced (brain, choroid plexus)"/>
</dbReference>
<dbReference type="MalaCards" id="AIFM3"/>
<dbReference type="MIM" id="617298">
    <property type="type" value="gene"/>
</dbReference>
<dbReference type="neXtProt" id="NX_Q96NN9"/>
<dbReference type="OpenTargets" id="ENSG00000183773"/>
<dbReference type="PharmGKB" id="PA162376173"/>
<dbReference type="VEuPathDB" id="HostDB:ENSG00000183773"/>
<dbReference type="eggNOG" id="KOG1336">
    <property type="taxonomic scope" value="Eukaryota"/>
</dbReference>
<dbReference type="GeneTree" id="ENSGT00940000160448"/>
<dbReference type="InParanoid" id="Q96NN9"/>
<dbReference type="OMA" id="PRCTHYG"/>
<dbReference type="OrthoDB" id="432169at2759"/>
<dbReference type="PAN-GO" id="Q96NN9">
    <property type="GO annotations" value="4 GO annotations based on evolutionary models"/>
</dbReference>
<dbReference type="PhylomeDB" id="Q96NN9"/>
<dbReference type="TreeFam" id="TF314028"/>
<dbReference type="PathwayCommons" id="Q96NN9"/>
<dbReference type="SignaLink" id="Q96NN9"/>
<dbReference type="BioGRID-ORCS" id="150209">
    <property type="hits" value="23 hits in 1150 CRISPR screens"/>
</dbReference>
<dbReference type="CD-CODE" id="FB4E32DD">
    <property type="entry name" value="Presynaptic clusters and postsynaptic densities"/>
</dbReference>
<dbReference type="ChiTaRS" id="AIFM3">
    <property type="organism name" value="human"/>
</dbReference>
<dbReference type="GenomeRNAi" id="150209"/>
<dbReference type="Pharos" id="Q96NN9">
    <property type="development level" value="Tbio"/>
</dbReference>
<dbReference type="PRO" id="PR:Q96NN9"/>
<dbReference type="Proteomes" id="UP000005640">
    <property type="component" value="Chromosome 22"/>
</dbReference>
<dbReference type="RNAct" id="Q96NN9">
    <property type="molecule type" value="protein"/>
</dbReference>
<dbReference type="Bgee" id="ENSG00000183773">
    <property type="expression patterns" value="Expressed in mucosa of transverse colon and 114 other cell types or tissues"/>
</dbReference>
<dbReference type="ExpressionAtlas" id="Q96NN9">
    <property type="expression patterns" value="baseline and differential"/>
</dbReference>
<dbReference type="GO" id="GO:0005737">
    <property type="term" value="C:cytoplasm"/>
    <property type="evidence" value="ECO:0000318"/>
    <property type="project" value="GO_Central"/>
</dbReference>
<dbReference type="GO" id="GO:0005829">
    <property type="term" value="C:cytosol"/>
    <property type="evidence" value="ECO:0000314"/>
    <property type="project" value="HPA"/>
</dbReference>
<dbReference type="GO" id="GO:0005783">
    <property type="term" value="C:endoplasmic reticulum"/>
    <property type="evidence" value="ECO:0000314"/>
    <property type="project" value="HGNC-UCL"/>
</dbReference>
<dbReference type="GO" id="GO:0005743">
    <property type="term" value="C:mitochondrial inner membrane"/>
    <property type="evidence" value="ECO:0000314"/>
    <property type="project" value="HGNC-UCL"/>
</dbReference>
<dbReference type="GO" id="GO:0005739">
    <property type="term" value="C:mitochondrion"/>
    <property type="evidence" value="ECO:0000314"/>
    <property type="project" value="HGNC-UCL"/>
</dbReference>
<dbReference type="GO" id="GO:0051537">
    <property type="term" value="F:2 iron, 2 sulfur cluster binding"/>
    <property type="evidence" value="ECO:0007669"/>
    <property type="project" value="UniProtKB-KW"/>
</dbReference>
<dbReference type="GO" id="GO:0046872">
    <property type="term" value="F:metal ion binding"/>
    <property type="evidence" value="ECO:0007669"/>
    <property type="project" value="UniProtKB-KW"/>
</dbReference>
<dbReference type="GO" id="GO:0016651">
    <property type="term" value="F:oxidoreductase activity, acting on NAD(P)H"/>
    <property type="evidence" value="ECO:0000318"/>
    <property type="project" value="GO_Central"/>
</dbReference>
<dbReference type="GO" id="GO:0097194">
    <property type="term" value="P:execution phase of apoptosis"/>
    <property type="evidence" value="ECO:0000314"/>
    <property type="project" value="BHF-UCL"/>
</dbReference>
<dbReference type="CDD" id="cd03478">
    <property type="entry name" value="Rieske_AIFL_N"/>
    <property type="match status" value="1"/>
</dbReference>
<dbReference type="FunFam" id="3.50.50.60:FF:000058">
    <property type="entry name" value="apoptosis-inducing factor 3 isoform X1"/>
    <property type="match status" value="1"/>
</dbReference>
<dbReference type="FunFam" id="2.102.10.10:FF:000003">
    <property type="entry name" value="apoptosis-inducing factor 3 isoform X2"/>
    <property type="match status" value="1"/>
</dbReference>
<dbReference type="FunFam" id="3.30.390.30:FF:000011">
    <property type="entry name" value="Apoptosis-inducing factor, mitochondrion-associated, 3"/>
    <property type="match status" value="1"/>
</dbReference>
<dbReference type="Gene3D" id="3.30.390.30">
    <property type="match status" value="1"/>
</dbReference>
<dbReference type="Gene3D" id="3.50.50.60">
    <property type="entry name" value="FAD/NAD(P)-binding domain"/>
    <property type="match status" value="2"/>
</dbReference>
<dbReference type="Gene3D" id="2.102.10.10">
    <property type="entry name" value="Rieske [2Fe-2S] iron-sulphur domain"/>
    <property type="match status" value="1"/>
</dbReference>
<dbReference type="InterPro" id="IPR050446">
    <property type="entry name" value="FAD-oxidoreductase/Apoptosis"/>
</dbReference>
<dbReference type="InterPro" id="IPR036188">
    <property type="entry name" value="FAD/NAD-bd_sf"/>
</dbReference>
<dbReference type="InterPro" id="IPR023753">
    <property type="entry name" value="FAD/NAD-binding_dom"/>
</dbReference>
<dbReference type="InterPro" id="IPR016156">
    <property type="entry name" value="FAD/NAD-linked_Rdtase_dimer_sf"/>
</dbReference>
<dbReference type="InterPro" id="IPR028202">
    <property type="entry name" value="Reductase_C"/>
</dbReference>
<dbReference type="InterPro" id="IPR017941">
    <property type="entry name" value="Rieske_2Fe-2S"/>
</dbReference>
<dbReference type="InterPro" id="IPR036922">
    <property type="entry name" value="Rieske_2Fe-2S_sf"/>
</dbReference>
<dbReference type="PANTHER" id="PTHR43557">
    <property type="entry name" value="APOPTOSIS-INDUCING FACTOR 1"/>
    <property type="match status" value="1"/>
</dbReference>
<dbReference type="PANTHER" id="PTHR43557:SF8">
    <property type="entry name" value="APOPTOSIS-INDUCING FACTOR 3"/>
    <property type="match status" value="1"/>
</dbReference>
<dbReference type="Pfam" id="PF07992">
    <property type="entry name" value="Pyr_redox_2"/>
    <property type="match status" value="1"/>
</dbReference>
<dbReference type="Pfam" id="PF14759">
    <property type="entry name" value="Reductase_C"/>
    <property type="match status" value="1"/>
</dbReference>
<dbReference type="Pfam" id="PF00355">
    <property type="entry name" value="Rieske"/>
    <property type="match status" value="1"/>
</dbReference>
<dbReference type="PRINTS" id="PR00368">
    <property type="entry name" value="FADPNR"/>
</dbReference>
<dbReference type="PRINTS" id="PR00469">
    <property type="entry name" value="PNDRDTASEII"/>
</dbReference>
<dbReference type="SUPFAM" id="SSF51905">
    <property type="entry name" value="FAD/NAD(P)-binding domain"/>
    <property type="match status" value="1"/>
</dbReference>
<dbReference type="SUPFAM" id="SSF55424">
    <property type="entry name" value="FAD/NAD-linked reductases, dimerisation (C-terminal) domain"/>
    <property type="match status" value="1"/>
</dbReference>
<dbReference type="SUPFAM" id="SSF50022">
    <property type="entry name" value="ISP domain"/>
    <property type="match status" value="1"/>
</dbReference>
<dbReference type="PROSITE" id="PS51296">
    <property type="entry name" value="RIESKE"/>
    <property type="match status" value="1"/>
</dbReference>
<comment type="function">
    <text evidence="4">Induces apoptosis through a caspase dependent pathway. Reduces mitochondrial membrane potential.</text>
</comment>
<comment type="subcellular location">
    <subcellularLocation>
        <location evidence="4">Mitochondrion</location>
    </subcellularLocation>
    <text>Does not translocate to the nucleus upon induction of apoptosis.</text>
</comment>
<comment type="alternative products">
    <event type="alternative splicing"/>
    <isoform>
        <id>Q96NN9-1</id>
        <name>1</name>
        <sequence type="displayed"/>
    </isoform>
    <isoform>
        <id>Q96NN9-2</id>
        <name>2</name>
        <sequence type="described" ref="VSP_021300 VSP_021303"/>
    </isoform>
    <isoform>
        <id>Q96NN9-3</id>
        <name>3</name>
        <sequence type="described" ref="VSP_021303"/>
    </isoform>
</comment>
<comment type="tissue specificity">
    <text evidence="4">Ubiquitous. Expressed in bone marrow, cerebral cortex, liver, ovary, thymus, thyroid gland and tongue (at protein level).</text>
</comment>
<comment type="domain">
    <text>The Rieske domain induces apoptosis.</text>
</comment>
<comment type="similarity">
    <text evidence="7">Belongs to the FAD-dependent oxidoreductase family.</text>
</comment>
<name>AIFM3_HUMAN</name>
<sequence>MGGCFSKPKPVELKIEVVLPEKERGKEELSASGKGSPRAYQGNGTARHFHTEERLSTPHPYPSPQDCVEAAVCHVKDLENGQMREVELGWGKVLLVKDNGEFHALGHKCPHYGAPLVKGVLSRGRVRCPWHGACFNISTGDLEDFPGLDSLHKFQVKIEKEKVYVRASKQALQLQRRTKVMAKCISPSAGYSSSTNVLIVGAGAAGLVCAETLRQEGFSDRIVLCTLDRHLPYDRPKLSKSLDTQPEQLALRPKEFFRAYGIEVLTEAQVVTVDVRTKKVVFKDGFKLEYSKLLLAPGSSPKTLSCKGKEVENVFTIRTPEDANRVVRLARGRNVVVVGAGFLGMEVAAYLTEKAHSVSVVELEETPFRRFLGERVGRALMKMFENNRVKFYMQTEVSELRGQEGKLKEVVLKSSKVVRADVCVVGIGAVPATGFLRQSGIGLDSRGFIPVNKMMQTNVPGVFAAGDAVTFPLAWRNNRKVNIPHWQMAHAQGRVAAQNMLAQEAEMSTVPYLWTAMFGKSLRYAGYGEGFDDVIIQGDLEELKFVAFYTKGDEVIAVASMNYDPIVSKVAEVLASGRAIRKREVELFVLHSKTGDMSWLTGKGS</sequence>
<proteinExistence type="evidence at protein level"/>
<evidence type="ECO:0000255" key="1"/>
<evidence type="ECO:0000255" key="2">
    <source>
        <dbReference type="PROSITE-ProRule" id="PRU00628"/>
    </source>
</evidence>
<evidence type="ECO:0000256" key="3">
    <source>
        <dbReference type="SAM" id="MobiDB-lite"/>
    </source>
</evidence>
<evidence type="ECO:0000269" key="4">
    <source>
    </source>
</evidence>
<evidence type="ECO:0000303" key="5">
    <source>
    </source>
</evidence>
<evidence type="ECO:0000303" key="6">
    <source>
    </source>
</evidence>
<evidence type="ECO:0000305" key="7"/>
<feature type="chain" id="PRO_0000255660" description="Apoptosis-inducing factor 3">
    <location>
        <begin position="1"/>
        <end position="605"/>
    </location>
</feature>
<feature type="domain" description="Rieske" evidence="2">
    <location>
        <begin position="70"/>
        <end position="165"/>
    </location>
</feature>
<feature type="region of interest" description="Disordered" evidence="3">
    <location>
        <begin position="22"/>
        <end position="45"/>
    </location>
</feature>
<feature type="binding site" evidence="2">
    <location>
        <position position="109"/>
    </location>
    <ligand>
        <name>[2Fe-2S] cluster</name>
        <dbReference type="ChEBI" id="CHEBI:190135"/>
    </ligand>
</feature>
<feature type="binding site" evidence="2">
    <location>
        <position position="111"/>
    </location>
    <ligand>
        <name>[2Fe-2S] cluster</name>
        <dbReference type="ChEBI" id="CHEBI:190135"/>
    </ligand>
</feature>
<feature type="binding site" evidence="2">
    <location>
        <position position="128"/>
    </location>
    <ligand>
        <name>[2Fe-2S] cluster</name>
        <dbReference type="ChEBI" id="CHEBI:190135"/>
    </ligand>
</feature>
<feature type="binding site" evidence="2">
    <location>
        <position position="131"/>
    </location>
    <ligand>
        <name>[2Fe-2S] cluster</name>
        <dbReference type="ChEBI" id="CHEBI:190135"/>
    </ligand>
</feature>
<feature type="binding site" evidence="1">
    <location>
        <begin position="201"/>
        <end position="205"/>
    </location>
    <ligand>
        <name>FAD</name>
        <dbReference type="ChEBI" id="CHEBI:57692"/>
    </ligand>
</feature>
<feature type="binding site" evidence="1">
    <location>
        <position position="235"/>
    </location>
    <ligand>
        <name>FAD</name>
        <dbReference type="ChEBI" id="CHEBI:57692"/>
    </ligand>
</feature>
<feature type="binding site" evidence="1">
    <location>
        <position position="240"/>
    </location>
    <ligand>
        <name>FAD</name>
        <dbReference type="ChEBI" id="CHEBI:57692"/>
    </ligand>
</feature>
<feature type="binding site" evidence="1">
    <location>
        <position position="270"/>
    </location>
    <ligand>
        <name>FAD</name>
        <dbReference type="ChEBI" id="CHEBI:57692"/>
    </ligand>
</feature>
<feature type="binding site" evidence="1">
    <location>
        <position position="467"/>
    </location>
    <ligand>
        <name>FAD</name>
        <dbReference type="ChEBI" id="CHEBI:57692"/>
    </ligand>
</feature>
<feature type="binding site" evidence="1">
    <location>
        <position position="514"/>
    </location>
    <ligand>
        <name>FAD</name>
        <dbReference type="ChEBI" id="CHEBI:57692"/>
    </ligand>
</feature>
<feature type="splice variant" id="VSP_021300" description="In isoform 2." evidence="5">
    <original>P</original>
    <variation>PGAALPT</variation>
    <location>
        <position position="10"/>
    </location>
</feature>
<feature type="splice variant" id="VSP_021303" description="In isoform 2 and isoform 3." evidence="5 6">
    <location>
        <begin position="587"/>
        <end position="593"/>
    </location>
</feature>
<feature type="sequence variant" id="VAR_061553" description="In dbSNP:rs61356271.">
    <original>S</original>
    <variation>T</variation>
    <location>
        <position position="508"/>
    </location>
</feature>
<feature type="sequence conflict" description="In Ref. 3; BAC04434." evidence="7" ref="3">
    <original>V</original>
    <variation>A</variation>
    <location>
        <position position="165"/>
    </location>
</feature>
<organism>
    <name type="scientific">Homo sapiens</name>
    <name type="common">Human</name>
    <dbReference type="NCBI Taxonomy" id="9606"/>
    <lineage>
        <taxon>Eukaryota</taxon>
        <taxon>Metazoa</taxon>
        <taxon>Chordata</taxon>
        <taxon>Craniata</taxon>
        <taxon>Vertebrata</taxon>
        <taxon>Euteleostomi</taxon>
        <taxon>Mammalia</taxon>
        <taxon>Eutheria</taxon>
        <taxon>Euarchontoglires</taxon>
        <taxon>Primates</taxon>
        <taxon>Haplorrhini</taxon>
        <taxon>Catarrhini</taxon>
        <taxon>Hominidae</taxon>
        <taxon>Homo</taxon>
    </lineage>
</organism>
<gene>
    <name type="primary">AIFM3</name>
    <name type="synonym">AIFL</name>
</gene>